<comment type="function">
    <text evidence="1">The RecF protein is involved in DNA metabolism; it is required for DNA replication and normal SOS inducibility. RecF binds preferentially to single-stranded, linear DNA. It also seems to bind ATP.</text>
</comment>
<comment type="subcellular location">
    <subcellularLocation>
        <location evidence="1">Cytoplasm</location>
    </subcellularLocation>
</comment>
<comment type="similarity">
    <text evidence="1">Belongs to the RecF family.</text>
</comment>
<proteinExistence type="inferred from homology"/>
<reference key="1">
    <citation type="journal article" date="2003" name="Proc. Natl. Acad. Sci. U.S.A.">
        <title>The complete genome sequence of the Arabidopsis and tomato pathogen Pseudomonas syringae pv. tomato DC3000.</title>
        <authorList>
            <person name="Buell C.R."/>
            <person name="Joardar V."/>
            <person name="Lindeberg M."/>
            <person name="Selengut J."/>
            <person name="Paulsen I.T."/>
            <person name="Gwinn M.L."/>
            <person name="Dodson R.J."/>
            <person name="DeBoy R.T."/>
            <person name="Durkin A.S."/>
            <person name="Kolonay J.F."/>
            <person name="Madupu R."/>
            <person name="Daugherty S.C."/>
            <person name="Brinkac L.M."/>
            <person name="Beanan M.J."/>
            <person name="Haft D.H."/>
            <person name="Nelson W.C."/>
            <person name="Davidsen T.M."/>
            <person name="Zafar N."/>
            <person name="Zhou L."/>
            <person name="Liu J."/>
            <person name="Yuan Q."/>
            <person name="Khouri H.M."/>
            <person name="Fedorova N.B."/>
            <person name="Tran B."/>
            <person name="Russell D."/>
            <person name="Berry K.J."/>
            <person name="Utterback T.R."/>
            <person name="Van Aken S.E."/>
            <person name="Feldblyum T.V."/>
            <person name="D'Ascenzo M."/>
            <person name="Deng W.-L."/>
            <person name="Ramos A.R."/>
            <person name="Alfano J.R."/>
            <person name="Cartinhour S."/>
            <person name="Chatterjee A.K."/>
            <person name="Delaney T.P."/>
            <person name="Lazarowitz S.G."/>
            <person name="Martin G.B."/>
            <person name="Schneider D.J."/>
            <person name="Tang X."/>
            <person name="Bender C.L."/>
            <person name="White O."/>
            <person name="Fraser C.M."/>
            <person name="Collmer A."/>
        </authorList>
    </citation>
    <scope>NUCLEOTIDE SEQUENCE [LARGE SCALE GENOMIC DNA]</scope>
    <source>
        <strain>ATCC BAA-871 / DC3000</strain>
    </source>
</reference>
<evidence type="ECO:0000255" key="1">
    <source>
        <dbReference type="HAMAP-Rule" id="MF_00365"/>
    </source>
</evidence>
<name>RECF_PSESM</name>
<gene>
    <name evidence="1" type="primary">recF</name>
    <name type="ordered locus">PSPTO_0003</name>
</gene>
<sequence length="367" mass="41584">MSLSRVSVTGVRNLHPVTLSPSPRINILYGANGSGKTSVLEAIHLLGIARSFRSSRLLPVIQYEQPSCTVFGQVDLAQGGHSNLGVSRDRQGEFQIRIDGQNARSAAQLAEILPLQLINPDSFRLLEGAPKIRRQFLDWGVFHVEPRFMSTWQRLQKALKQRNSWLRHGTLDAASQAAWDRELCLASDEIDEFRRAYIKALKPVFEKTLSELVELEGLTLSYYRGWDKEKELSTVLASSLNRDQQMGHTQAGPQRADLRLRLGAHNAADILSRGQQKLVVCALRIAQGHLVSQVRRGQCIYLVDDLPSELDDNHRRALCRLLEELRCQVFITCVDQEFLREGWQTDTPVALFHVEQGRITQTHDHRE</sequence>
<keyword id="KW-0067">ATP-binding</keyword>
<keyword id="KW-0963">Cytoplasm</keyword>
<keyword id="KW-0227">DNA damage</keyword>
<keyword id="KW-0234">DNA repair</keyword>
<keyword id="KW-0235">DNA replication</keyword>
<keyword id="KW-0238">DNA-binding</keyword>
<keyword id="KW-0547">Nucleotide-binding</keyword>
<keyword id="KW-1185">Reference proteome</keyword>
<keyword id="KW-0742">SOS response</keyword>
<protein>
    <recommendedName>
        <fullName evidence="1">DNA replication and repair protein RecF</fullName>
    </recommendedName>
</protein>
<organism>
    <name type="scientific">Pseudomonas syringae pv. tomato (strain ATCC BAA-871 / DC3000)</name>
    <dbReference type="NCBI Taxonomy" id="223283"/>
    <lineage>
        <taxon>Bacteria</taxon>
        <taxon>Pseudomonadati</taxon>
        <taxon>Pseudomonadota</taxon>
        <taxon>Gammaproteobacteria</taxon>
        <taxon>Pseudomonadales</taxon>
        <taxon>Pseudomonadaceae</taxon>
        <taxon>Pseudomonas</taxon>
    </lineage>
</organism>
<dbReference type="EMBL" id="AE016853">
    <property type="protein sequence ID" value="AAO53560.1"/>
    <property type="molecule type" value="Genomic_DNA"/>
</dbReference>
<dbReference type="RefSeq" id="NP_789865.1">
    <property type="nucleotide sequence ID" value="NC_004578.1"/>
</dbReference>
<dbReference type="RefSeq" id="WP_003377871.1">
    <property type="nucleotide sequence ID" value="NC_004578.1"/>
</dbReference>
<dbReference type="SMR" id="Q88BK1"/>
<dbReference type="STRING" id="223283.PSPTO_0003"/>
<dbReference type="GeneID" id="61789436"/>
<dbReference type="KEGG" id="pst:PSPTO_0003"/>
<dbReference type="PATRIC" id="fig|223283.9.peg.3"/>
<dbReference type="eggNOG" id="COG1195">
    <property type="taxonomic scope" value="Bacteria"/>
</dbReference>
<dbReference type="HOGENOM" id="CLU_040267_0_0_6"/>
<dbReference type="OrthoDB" id="9803889at2"/>
<dbReference type="PhylomeDB" id="Q88BK1"/>
<dbReference type="Proteomes" id="UP000002515">
    <property type="component" value="Chromosome"/>
</dbReference>
<dbReference type="GO" id="GO:0005737">
    <property type="term" value="C:cytoplasm"/>
    <property type="evidence" value="ECO:0007669"/>
    <property type="project" value="UniProtKB-SubCell"/>
</dbReference>
<dbReference type="GO" id="GO:0005524">
    <property type="term" value="F:ATP binding"/>
    <property type="evidence" value="ECO:0007669"/>
    <property type="project" value="UniProtKB-UniRule"/>
</dbReference>
<dbReference type="GO" id="GO:0003697">
    <property type="term" value="F:single-stranded DNA binding"/>
    <property type="evidence" value="ECO:0007669"/>
    <property type="project" value="UniProtKB-UniRule"/>
</dbReference>
<dbReference type="GO" id="GO:0006260">
    <property type="term" value="P:DNA replication"/>
    <property type="evidence" value="ECO:0007669"/>
    <property type="project" value="UniProtKB-UniRule"/>
</dbReference>
<dbReference type="GO" id="GO:0000731">
    <property type="term" value="P:DNA synthesis involved in DNA repair"/>
    <property type="evidence" value="ECO:0007669"/>
    <property type="project" value="TreeGrafter"/>
</dbReference>
<dbReference type="GO" id="GO:0006302">
    <property type="term" value="P:double-strand break repair"/>
    <property type="evidence" value="ECO:0007669"/>
    <property type="project" value="TreeGrafter"/>
</dbReference>
<dbReference type="GO" id="GO:0009432">
    <property type="term" value="P:SOS response"/>
    <property type="evidence" value="ECO:0007669"/>
    <property type="project" value="UniProtKB-UniRule"/>
</dbReference>
<dbReference type="FunFam" id="1.20.1050.90:FF:000003">
    <property type="entry name" value="DNA replication and repair protein RecF"/>
    <property type="match status" value="1"/>
</dbReference>
<dbReference type="Gene3D" id="3.40.50.300">
    <property type="entry name" value="P-loop containing nucleotide triphosphate hydrolases"/>
    <property type="match status" value="1"/>
</dbReference>
<dbReference type="Gene3D" id="1.20.1050.90">
    <property type="entry name" value="RecF/RecN/SMC, N-terminal domain"/>
    <property type="match status" value="1"/>
</dbReference>
<dbReference type="HAMAP" id="MF_00365">
    <property type="entry name" value="RecF"/>
    <property type="match status" value="1"/>
</dbReference>
<dbReference type="InterPro" id="IPR001238">
    <property type="entry name" value="DNA-binding_RecF"/>
</dbReference>
<dbReference type="InterPro" id="IPR018078">
    <property type="entry name" value="DNA-binding_RecF_CS"/>
</dbReference>
<dbReference type="InterPro" id="IPR027417">
    <property type="entry name" value="P-loop_NTPase"/>
</dbReference>
<dbReference type="InterPro" id="IPR003395">
    <property type="entry name" value="RecF/RecN/SMC_N"/>
</dbReference>
<dbReference type="InterPro" id="IPR042174">
    <property type="entry name" value="RecF_2"/>
</dbReference>
<dbReference type="NCBIfam" id="TIGR00611">
    <property type="entry name" value="recf"/>
    <property type="match status" value="1"/>
</dbReference>
<dbReference type="PANTHER" id="PTHR32182">
    <property type="entry name" value="DNA REPLICATION AND REPAIR PROTEIN RECF"/>
    <property type="match status" value="1"/>
</dbReference>
<dbReference type="PANTHER" id="PTHR32182:SF0">
    <property type="entry name" value="DNA REPLICATION AND REPAIR PROTEIN RECF"/>
    <property type="match status" value="1"/>
</dbReference>
<dbReference type="Pfam" id="PF02463">
    <property type="entry name" value="SMC_N"/>
    <property type="match status" value="1"/>
</dbReference>
<dbReference type="SUPFAM" id="SSF52540">
    <property type="entry name" value="P-loop containing nucleoside triphosphate hydrolases"/>
    <property type="match status" value="1"/>
</dbReference>
<dbReference type="PROSITE" id="PS00617">
    <property type="entry name" value="RECF_1"/>
    <property type="match status" value="1"/>
</dbReference>
<dbReference type="PROSITE" id="PS00618">
    <property type="entry name" value="RECF_2"/>
    <property type="match status" value="1"/>
</dbReference>
<feature type="chain" id="PRO_0000196446" description="DNA replication and repair protein RecF">
    <location>
        <begin position="1"/>
        <end position="367"/>
    </location>
</feature>
<feature type="binding site" evidence="1">
    <location>
        <begin position="30"/>
        <end position="37"/>
    </location>
    <ligand>
        <name>ATP</name>
        <dbReference type="ChEBI" id="CHEBI:30616"/>
    </ligand>
</feature>
<accession>Q88BK1</accession>